<keyword id="KW-0010">Activator</keyword>
<keyword id="KW-0539">Nucleus</keyword>
<keyword id="KW-1185">Reference proteome</keyword>
<keyword id="KW-0804">Transcription</keyword>
<keyword id="KW-0805">Transcription regulation</keyword>
<name>MED29_XENLA</name>
<sequence>MAMLLNQAQPPQTRDGGGTQGASLGPGVPVGQQQLGLQQQQQDFDPVQRYRMLIPQLKESLQNLMKIAAQNLAQNTNIDNGQKSADGPVQRFDKSLEEFYALCDQMELCLRLAYECLSQSYDSAKHSPTLVPTATKPDAVQTESLPYTQYLSMIKSQISCAKDIHNALLECSKKIMGKTPNTQGGL</sequence>
<accession>Q66KX4</accession>
<gene>
    <name type="primary">med29</name>
    <name type="synonym">ixl</name>
</gene>
<dbReference type="EMBL" id="BC078525">
    <property type="protein sequence ID" value="AAH78525.1"/>
    <property type="molecule type" value="mRNA"/>
</dbReference>
<dbReference type="RefSeq" id="NP_001087298.1">
    <property type="nucleotide sequence ID" value="NM_001093829.1"/>
</dbReference>
<dbReference type="SMR" id="Q66KX4"/>
<dbReference type="DNASU" id="447120"/>
<dbReference type="GeneID" id="447120"/>
<dbReference type="KEGG" id="xla:447120"/>
<dbReference type="AGR" id="Xenbase:XB-GENE-6254344"/>
<dbReference type="CTD" id="447120"/>
<dbReference type="Xenbase" id="XB-GENE-6254344">
    <property type="gene designation" value="med29.L"/>
</dbReference>
<dbReference type="OMA" id="NHYLPGP"/>
<dbReference type="OrthoDB" id="6366949at2759"/>
<dbReference type="Proteomes" id="UP000186698">
    <property type="component" value="Chromosome 8L"/>
</dbReference>
<dbReference type="Bgee" id="447120">
    <property type="expression patterns" value="Expressed in oocyte and 19 other cell types or tissues"/>
</dbReference>
<dbReference type="GO" id="GO:0016592">
    <property type="term" value="C:mediator complex"/>
    <property type="evidence" value="ECO:0000318"/>
    <property type="project" value="GO_Central"/>
</dbReference>
<dbReference type="GO" id="GO:0003712">
    <property type="term" value="F:transcription coregulator activity"/>
    <property type="evidence" value="ECO:0000318"/>
    <property type="project" value="GO_Central"/>
</dbReference>
<dbReference type="GO" id="GO:0006357">
    <property type="term" value="P:regulation of transcription by RNA polymerase II"/>
    <property type="evidence" value="ECO:0000318"/>
    <property type="project" value="GO_Central"/>
</dbReference>
<dbReference type="InterPro" id="IPR021018">
    <property type="entry name" value="Mediator_Med29_met"/>
</dbReference>
<dbReference type="PANTHER" id="PTHR28314">
    <property type="entry name" value="MEDIATOR OF RNA POLYMERASE II TRANSCRIPTION SUBUNIT 29"/>
    <property type="match status" value="1"/>
</dbReference>
<dbReference type="PANTHER" id="PTHR28314:SF1">
    <property type="entry name" value="MEDIATOR OF RNA POLYMERASE II TRANSCRIPTION SUBUNIT 29"/>
    <property type="match status" value="1"/>
</dbReference>
<dbReference type="Pfam" id="PF11568">
    <property type="entry name" value="Med29"/>
    <property type="match status" value="1"/>
</dbReference>
<organism>
    <name type="scientific">Xenopus laevis</name>
    <name type="common">African clawed frog</name>
    <dbReference type="NCBI Taxonomy" id="8355"/>
    <lineage>
        <taxon>Eukaryota</taxon>
        <taxon>Metazoa</taxon>
        <taxon>Chordata</taxon>
        <taxon>Craniata</taxon>
        <taxon>Vertebrata</taxon>
        <taxon>Euteleostomi</taxon>
        <taxon>Amphibia</taxon>
        <taxon>Batrachia</taxon>
        <taxon>Anura</taxon>
        <taxon>Pipoidea</taxon>
        <taxon>Pipidae</taxon>
        <taxon>Xenopodinae</taxon>
        <taxon>Xenopus</taxon>
        <taxon>Xenopus</taxon>
    </lineage>
</organism>
<reference key="1">
    <citation type="submission" date="2004-07" db="EMBL/GenBank/DDBJ databases">
        <authorList>
            <consortium name="NIH - Xenopus Gene Collection (XGC) project"/>
        </authorList>
    </citation>
    <scope>NUCLEOTIDE SEQUENCE [LARGE SCALE MRNA]</scope>
</reference>
<protein>
    <recommendedName>
        <fullName>Mediator of RNA polymerase II transcription subunit 29</fullName>
    </recommendedName>
    <alternativeName>
        <fullName>Intersex-like protein</fullName>
    </alternativeName>
    <alternativeName>
        <fullName>Mediator complex subunit 29</fullName>
    </alternativeName>
</protein>
<evidence type="ECO:0000250" key="1"/>
<evidence type="ECO:0000256" key="2">
    <source>
        <dbReference type="SAM" id="MobiDB-lite"/>
    </source>
</evidence>
<evidence type="ECO:0000305" key="3"/>
<proteinExistence type="evidence at transcript level"/>
<feature type="chain" id="PRO_0000288062" description="Mediator of RNA polymerase II transcription subunit 29">
    <location>
        <begin position="1"/>
        <end position="186"/>
    </location>
</feature>
<feature type="region of interest" description="Disordered" evidence="2">
    <location>
        <begin position="1"/>
        <end position="41"/>
    </location>
</feature>
<feature type="compositionally biased region" description="Polar residues" evidence="2">
    <location>
        <begin position="1"/>
        <end position="12"/>
    </location>
</feature>
<feature type="compositionally biased region" description="Low complexity" evidence="2">
    <location>
        <begin position="25"/>
        <end position="41"/>
    </location>
</feature>
<comment type="function">
    <text evidence="1">Component of the Mediator complex, a coactivator involved in the regulated transcription of nearly all RNA polymerase II-dependent genes. Mediator functions as a bridge to convey information from gene-specific regulatory proteins to the basal RNA polymerase II transcription machinery. Mediator is recruited to promoters by direct interactions with regulatory proteins and serves as a scaffold for the assembly of a functional preinitiation complex with RNA polymerase II and the general transcription factors (By similarity).</text>
</comment>
<comment type="subunit">
    <text evidence="1">Component of the Mediator complex.</text>
</comment>
<comment type="subcellular location">
    <subcellularLocation>
        <location evidence="1">Nucleus</location>
    </subcellularLocation>
</comment>
<comment type="similarity">
    <text evidence="3">Belongs to the Mediator complex subunit 29 family.</text>
</comment>